<gene>
    <name type="primary">RFC5</name>
    <name type="synonym">EMB2810</name>
    <name type="synonym">RFC3</name>
    <name type="ordered locus">At1g77470</name>
    <name type="ORF">T5M16.6</name>
</gene>
<sequence length="369" mass="41370">MTELTSAMDIDVDEIQPRKPINKGKDVVGFGPPPQSKATPWVEKYRPQSLDDVAAHRDIIDTIDRLTNENKLPHLLLYGPPGTGKTSTILAVARKLYGPKYRNMILELNASDDRGIDVVRQQIQDFASTQSFSLGKSSVKLVLLDEADAMTKDAQFALRRVIEKYTKSTRFALIGNHVNKIIPALQSRCTRFRFAPLDGVHMSQRLKHVIEAERLVVSDCGLAALVRLSNGDMRKALNILQSTHMASKEITEEESKQITEEDVYLCTGNPLPKDIEQISHWLLNKPFDECYKDVSEIKTRKGLAIVDIVKEITLFIFKIKMPSAVRVQLINDLADIEYRLSFGCNDKLQLGAIISTFTHARSIIVGAAK</sequence>
<keyword id="KW-0067">ATP-binding</keyword>
<keyword id="KW-0235">DNA replication</keyword>
<keyword id="KW-0238">DNA-binding</keyword>
<keyword id="KW-0547">Nucleotide-binding</keyword>
<keyword id="KW-0539">Nucleus</keyword>
<keyword id="KW-0611">Plant defense</keyword>
<keyword id="KW-1185">Reference proteome</keyword>
<name>RFC5_ARATH</name>
<evidence type="ECO:0000250" key="1"/>
<evidence type="ECO:0000255" key="2"/>
<evidence type="ECO:0000256" key="3">
    <source>
        <dbReference type="SAM" id="MobiDB-lite"/>
    </source>
</evidence>
<evidence type="ECO:0000269" key="4">
    <source>
    </source>
</evidence>
<evidence type="ECO:0000269" key="5">
    <source>
    </source>
</evidence>
<evidence type="ECO:0000305" key="6"/>
<dbReference type="EMBL" id="AC010704">
    <property type="protein sequence ID" value="AAG51681.1"/>
    <property type="molecule type" value="Genomic_DNA"/>
</dbReference>
<dbReference type="EMBL" id="CP002684">
    <property type="protein sequence ID" value="AEE35982.1"/>
    <property type="molecule type" value="Genomic_DNA"/>
</dbReference>
<dbReference type="EMBL" id="AY065452">
    <property type="protein sequence ID" value="AAL38893.1"/>
    <property type="molecule type" value="mRNA"/>
</dbReference>
<dbReference type="EMBL" id="AY117282">
    <property type="protein sequence ID" value="AAM51357.1"/>
    <property type="molecule type" value="mRNA"/>
</dbReference>
<dbReference type="PIR" id="A96804">
    <property type="entry name" value="A96804"/>
</dbReference>
<dbReference type="RefSeq" id="NP_177871.1">
    <property type="nucleotide sequence ID" value="NM_106396.5"/>
</dbReference>
<dbReference type="SMR" id="Q9CAQ8"/>
<dbReference type="BioGRID" id="29302">
    <property type="interactions" value="3"/>
</dbReference>
<dbReference type="FunCoup" id="Q9CAQ8">
    <property type="interactions" value="3373"/>
</dbReference>
<dbReference type="IntAct" id="Q9CAQ8">
    <property type="interactions" value="2"/>
</dbReference>
<dbReference type="STRING" id="3702.Q9CAQ8"/>
<dbReference type="SwissPalm" id="Q9CAQ8"/>
<dbReference type="PaxDb" id="3702-AT1G77470.1"/>
<dbReference type="ProteomicsDB" id="236935"/>
<dbReference type="EnsemblPlants" id="AT1G77470.1">
    <property type="protein sequence ID" value="AT1G77470.1"/>
    <property type="gene ID" value="AT1G77470"/>
</dbReference>
<dbReference type="GeneID" id="844083"/>
<dbReference type="Gramene" id="AT1G77470.1">
    <property type="protein sequence ID" value="AT1G77470.1"/>
    <property type="gene ID" value="AT1G77470"/>
</dbReference>
<dbReference type="KEGG" id="ath:AT1G77470"/>
<dbReference type="Araport" id="AT1G77470"/>
<dbReference type="TAIR" id="AT1G77470">
    <property type="gene designation" value="RFC3"/>
</dbReference>
<dbReference type="eggNOG" id="KOG0990">
    <property type="taxonomic scope" value="Eukaryota"/>
</dbReference>
<dbReference type="HOGENOM" id="CLU_042324_2_0_1"/>
<dbReference type="InParanoid" id="Q9CAQ8"/>
<dbReference type="OMA" id="AEDNLPW"/>
<dbReference type="OrthoDB" id="4199794at2759"/>
<dbReference type="PhylomeDB" id="Q9CAQ8"/>
<dbReference type="CD-CODE" id="4299E36E">
    <property type="entry name" value="Nucleolus"/>
</dbReference>
<dbReference type="PRO" id="PR:Q9CAQ8"/>
<dbReference type="Proteomes" id="UP000006548">
    <property type="component" value="Chromosome 1"/>
</dbReference>
<dbReference type="ExpressionAtlas" id="Q9CAQ8">
    <property type="expression patterns" value="baseline and differential"/>
</dbReference>
<dbReference type="GO" id="GO:0005634">
    <property type="term" value="C:nucleus"/>
    <property type="evidence" value="ECO:0007669"/>
    <property type="project" value="UniProtKB-SubCell"/>
</dbReference>
<dbReference type="GO" id="GO:0005524">
    <property type="term" value="F:ATP binding"/>
    <property type="evidence" value="ECO:0007669"/>
    <property type="project" value="UniProtKB-KW"/>
</dbReference>
<dbReference type="GO" id="GO:0016887">
    <property type="term" value="F:ATP hydrolysis activity"/>
    <property type="evidence" value="ECO:0007669"/>
    <property type="project" value="InterPro"/>
</dbReference>
<dbReference type="GO" id="GO:0003677">
    <property type="term" value="F:DNA binding"/>
    <property type="evidence" value="ECO:0007669"/>
    <property type="project" value="UniProtKB-KW"/>
</dbReference>
<dbReference type="GO" id="GO:0006952">
    <property type="term" value="P:defense response"/>
    <property type="evidence" value="ECO:0007669"/>
    <property type="project" value="UniProtKB-KW"/>
</dbReference>
<dbReference type="GO" id="GO:0006260">
    <property type="term" value="P:DNA replication"/>
    <property type="evidence" value="ECO:0007669"/>
    <property type="project" value="UniProtKB-KW"/>
</dbReference>
<dbReference type="GO" id="GO:0031348">
    <property type="term" value="P:negative regulation of defense response"/>
    <property type="evidence" value="ECO:0000315"/>
    <property type="project" value="TAIR"/>
</dbReference>
<dbReference type="CDD" id="cd00009">
    <property type="entry name" value="AAA"/>
    <property type="match status" value="1"/>
</dbReference>
<dbReference type="CDD" id="cd18140">
    <property type="entry name" value="HLD_clamp_RFC"/>
    <property type="match status" value="1"/>
</dbReference>
<dbReference type="FunFam" id="1.10.8.60:FF:000028">
    <property type="entry name" value="Replication factor C subunit 5"/>
    <property type="match status" value="1"/>
</dbReference>
<dbReference type="FunFam" id="1.20.272.10:FF:000004">
    <property type="entry name" value="Replication factor C subunit 5"/>
    <property type="match status" value="1"/>
</dbReference>
<dbReference type="FunFam" id="3.40.50.300:FF:000129">
    <property type="entry name" value="Replication factor C subunit 5"/>
    <property type="match status" value="1"/>
</dbReference>
<dbReference type="Gene3D" id="1.10.8.60">
    <property type="match status" value="1"/>
</dbReference>
<dbReference type="Gene3D" id="1.20.272.10">
    <property type="match status" value="1"/>
</dbReference>
<dbReference type="Gene3D" id="3.40.50.300">
    <property type="entry name" value="P-loop containing nucleotide triphosphate hydrolases"/>
    <property type="match status" value="1"/>
</dbReference>
<dbReference type="InterPro" id="IPR003593">
    <property type="entry name" value="AAA+_ATPase"/>
</dbReference>
<dbReference type="InterPro" id="IPR003959">
    <property type="entry name" value="ATPase_AAA_core"/>
</dbReference>
<dbReference type="InterPro" id="IPR008921">
    <property type="entry name" value="DNA_pol3_clamp-load_cplx_C"/>
</dbReference>
<dbReference type="InterPro" id="IPR050238">
    <property type="entry name" value="DNA_Rep/Repair_Clamp_Loader"/>
</dbReference>
<dbReference type="InterPro" id="IPR027417">
    <property type="entry name" value="P-loop_NTPase"/>
</dbReference>
<dbReference type="InterPro" id="IPR013748">
    <property type="entry name" value="Rep_factorC_C"/>
</dbReference>
<dbReference type="InterPro" id="IPR047854">
    <property type="entry name" value="RFC_lid"/>
</dbReference>
<dbReference type="NCBIfam" id="NF001679">
    <property type="entry name" value="PRK00440.1"/>
    <property type="match status" value="1"/>
</dbReference>
<dbReference type="PANTHER" id="PTHR11669">
    <property type="entry name" value="REPLICATION FACTOR C / DNA POLYMERASE III GAMMA-TAU SUBUNIT"/>
    <property type="match status" value="1"/>
</dbReference>
<dbReference type="PANTHER" id="PTHR11669:SF9">
    <property type="entry name" value="REPLICATION FACTOR C SUBUNIT 5"/>
    <property type="match status" value="1"/>
</dbReference>
<dbReference type="Pfam" id="PF00004">
    <property type="entry name" value="AAA"/>
    <property type="match status" value="1"/>
</dbReference>
<dbReference type="Pfam" id="PF08542">
    <property type="entry name" value="Rep_fac_C"/>
    <property type="match status" value="1"/>
</dbReference>
<dbReference type="SMART" id="SM00382">
    <property type="entry name" value="AAA"/>
    <property type="match status" value="1"/>
</dbReference>
<dbReference type="SUPFAM" id="SSF52540">
    <property type="entry name" value="P-loop containing nucleoside triphosphate hydrolases"/>
    <property type="match status" value="1"/>
</dbReference>
<dbReference type="SUPFAM" id="SSF48019">
    <property type="entry name" value="post-AAA+ oligomerization domain-like"/>
    <property type="match status" value="1"/>
</dbReference>
<comment type="function">
    <text evidence="4 5">Functions in cell replication and proliferation. May be involved in chromatin assembly and remodeling. Plays a role in the negative control of pathogenesis-related gene expression and systemic acquired resistance (SAR).</text>
</comment>
<comment type="subunit">
    <text evidence="1">Heterotetramer of subunits RFC2, RFC3, RFC4 and RFC5 that can form a complex with RFC1.</text>
</comment>
<comment type="interaction">
    <interactant intactId="EBI-25513346">
        <id>Q9CAQ8</id>
    </interactant>
    <interactant intactId="EBI-25513796">
        <id>Q9CAM7</id>
        <label>RFC2</label>
    </interactant>
    <organismsDiffer>false</organismsDiffer>
    <experiments>3</experiments>
</comment>
<comment type="interaction">
    <interactant intactId="EBI-25513346">
        <id>Q9CAQ8</id>
    </interactant>
    <interactant intactId="EBI-4470690">
        <id>Q93ZX1</id>
        <label>RFC4</label>
    </interactant>
    <organismsDiffer>false</organismsDiffer>
    <experiments>7</experiments>
</comment>
<comment type="subcellular location">
    <subcellularLocation>
        <location evidence="4">Nucleus</location>
    </subcellularLocation>
</comment>
<comment type="induction">
    <text evidence="4">By salicylic acid (SA).</text>
</comment>
<comment type="disruption phenotype">
    <text evidence="4">Moderately dwarfed plants with small organs due to reduced cell proliferation rate. Enhanced resistance to pathogens.</text>
</comment>
<comment type="similarity">
    <text evidence="6">Belongs to the activator 1 small subunits family.</text>
</comment>
<feature type="chain" id="PRO_0000422633" description="Replication factor C subunit 5">
    <location>
        <begin position="1"/>
        <end position="369"/>
    </location>
</feature>
<feature type="region of interest" description="Disordered" evidence="3">
    <location>
        <begin position="21"/>
        <end position="40"/>
    </location>
</feature>
<feature type="binding site" evidence="2">
    <location>
        <begin position="79"/>
        <end position="86"/>
    </location>
    <ligand>
        <name>ATP</name>
        <dbReference type="ChEBI" id="CHEBI:30616"/>
    </ligand>
</feature>
<feature type="mutagenesis site" description="In rfc3-1; reduced plant size and enhanced disease resistance." evidence="4">
    <original>G</original>
    <variation>D</variation>
    <location>
        <position position="84"/>
    </location>
</feature>
<organism>
    <name type="scientific">Arabidopsis thaliana</name>
    <name type="common">Mouse-ear cress</name>
    <dbReference type="NCBI Taxonomy" id="3702"/>
    <lineage>
        <taxon>Eukaryota</taxon>
        <taxon>Viridiplantae</taxon>
        <taxon>Streptophyta</taxon>
        <taxon>Embryophyta</taxon>
        <taxon>Tracheophyta</taxon>
        <taxon>Spermatophyta</taxon>
        <taxon>Magnoliopsida</taxon>
        <taxon>eudicotyledons</taxon>
        <taxon>Gunneridae</taxon>
        <taxon>Pentapetalae</taxon>
        <taxon>rosids</taxon>
        <taxon>malvids</taxon>
        <taxon>Brassicales</taxon>
        <taxon>Brassicaceae</taxon>
        <taxon>Camelineae</taxon>
        <taxon>Arabidopsis</taxon>
    </lineage>
</organism>
<proteinExistence type="evidence at protein level"/>
<protein>
    <recommendedName>
        <fullName>Replication factor C subunit 5</fullName>
        <shortName>AtRFC5</shortName>
    </recommendedName>
    <alternativeName>
        <fullName>Activator 1 subunit 5</fullName>
    </alternativeName>
    <alternativeName>
        <fullName>Protein EMBRYO DEFECTIVE 2810</fullName>
    </alternativeName>
</protein>
<reference key="1">
    <citation type="journal article" date="2000" name="Nature">
        <title>Sequence and analysis of chromosome 1 of the plant Arabidopsis thaliana.</title>
        <authorList>
            <person name="Theologis A."/>
            <person name="Ecker J.R."/>
            <person name="Palm C.J."/>
            <person name="Federspiel N.A."/>
            <person name="Kaul S."/>
            <person name="White O."/>
            <person name="Alonso J."/>
            <person name="Altafi H."/>
            <person name="Araujo R."/>
            <person name="Bowman C.L."/>
            <person name="Brooks S.Y."/>
            <person name="Buehler E."/>
            <person name="Chan A."/>
            <person name="Chao Q."/>
            <person name="Chen H."/>
            <person name="Cheuk R.F."/>
            <person name="Chin C.W."/>
            <person name="Chung M.K."/>
            <person name="Conn L."/>
            <person name="Conway A.B."/>
            <person name="Conway A.R."/>
            <person name="Creasy T.H."/>
            <person name="Dewar K."/>
            <person name="Dunn P."/>
            <person name="Etgu P."/>
            <person name="Feldblyum T.V."/>
            <person name="Feng J.-D."/>
            <person name="Fong B."/>
            <person name="Fujii C.Y."/>
            <person name="Gill J.E."/>
            <person name="Goldsmith A.D."/>
            <person name="Haas B."/>
            <person name="Hansen N.F."/>
            <person name="Hughes B."/>
            <person name="Huizar L."/>
            <person name="Hunter J.L."/>
            <person name="Jenkins J."/>
            <person name="Johnson-Hopson C."/>
            <person name="Khan S."/>
            <person name="Khaykin E."/>
            <person name="Kim C.J."/>
            <person name="Koo H.L."/>
            <person name="Kremenetskaia I."/>
            <person name="Kurtz D.B."/>
            <person name="Kwan A."/>
            <person name="Lam B."/>
            <person name="Langin-Hooper S."/>
            <person name="Lee A."/>
            <person name="Lee J.M."/>
            <person name="Lenz C.A."/>
            <person name="Li J.H."/>
            <person name="Li Y.-P."/>
            <person name="Lin X."/>
            <person name="Liu S.X."/>
            <person name="Liu Z.A."/>
            <person name="Luros J.S."/>
            <person name="Maiti R."/>
            <person name="Marziali A."/>
            <person name="Militscher J."/>
            <person name="Miranda M."/>
            <person name="Nguyen M."/>
            <person name="Nierman W.C."/>
            <person name="Osborne B.I."/>
            <person name="Pai G."/>
            <person name="Peterson J."/>
            <person name="Pham P.K."/>
            <person name="Rizzo M."/>
            <person name="Rooney T."/>
            <person name="Rowley D."/>
            <person name="Sakano H."/>
            <person name="Salzberg S.L."/>
            <person name="Schwartz J.R."/>
            <person name="Shinn P."/>
            <person name="Southwick A.M."/>
            <person name="Sun H."/>
            <person name="Tallon L.J."/>
            <person name="Tambunga G."/>
            <person name="Toriumi M.J."/>
            <person name="Town C.D."/>
            <person name="Utterback T."/>
            <person name="Van Aken S."/>
            <person name="Vaysberg M."/>
            <person name="Vysotskaia V.S."/>
            <person name="Walker M."/>
            <person name="Wu D."/>
            <person name="Yu G."/>
            <person name="Fraser C.M."/>
            <person name="Venter J.C."/>
            <person name="Davis R.W."/>
        </authorList>
    </citation>
    <scope>NUCLEOTIDE SEQUENCE [LARGE SCALE GENOMIC DNA]</scope>
    <source>
        <strain>cv. Columbia</strain>
    </source>
</reference>
<reference key="2">
    <citation type="journal article" date="2017" name="Plant J.">
        <title>Araport11: a complete reannotation of the Arabidopsis thaliana reference genome.</title>
        <authorList>
            <person name="Cheng C.Y."/>
            <person name="Krishnakumar V."/>
            <person name="Chan A.P."/>
            <person name="Thibaud-Nissen F."/>
            <person name="Schobel S."/>
            <person name="Town C.D."/>
        </authorList>
    </citation>
    <scope>GENOME REANNOTATION</scope>
    <source>
        <strain>cv. Columbia</strain>
    </source>
</reference>
<reference key="3">
    <citation type="journal article" date="2003" name="Science">
        <title>Empirical analysis of transcriptional activity in the Arabidopsis genome.</title>
        <authorList>
            <person name="Yamada K."/>
            <person name="Lim J."/>
            <person name="Dale J.M."/>
            <person name="Chen H."/>
            <person name="Shinn P."/>
            <person name="Palm C.J."/>
            <person name="Southwick A.M."/>
            <person name="Wu H.C."/>
            <person name="Kim C.J."/>
            <person name="Nguyen M."/>
            <person name="Pham P.K."/>
            <person name="Cheuk R.F."/>
            <person name="Karlin-Newmann G."/>
            <person name="Liu S.X."/>
            <person name="Lam B."/>
            <person name="Sakano H."/>
            <person name="Wu T."/>
            <person name="Yu G."/>
            <person name="Miranda M."/>
            <person name="Quach H.L."/>
            <person name="Tripp M."/>
            <person name="Chang C.H."/>
            <person name="Lee J.M."/>
            <person name="Toriumi M.J."/>
            <person name="Chan M.M."/>
            <person name="Tang C.C."/>
            <person name="Onodera C.S."/>
            <person name="Deng J.M."/>
            <person name="Akiyama K."/>
            <person name="Ansari Y."/>
            <person name="Arakawa T."/>
            <person name="Banh J."/>
            <person name="Banno F."/>
            <person name="Bowser L."/>
            <person name="Brooks S.Y."/>
            <person name="Carninci P."/>
            <person name="Chao Q."/>
            <person name="Choy N."/>
            <person name="Enju A."/>
            <person name="Goldsmith A.D."/>
            <person name="Gurjal M."/>
            <person name="Hansen N.F."/>
            <person name="Hayashizaki Y."/>
            <person name="Johnson-Hopson C."/>
            <person name="Hsuan V.W."/>
            <person name="Iida K."/>
            <person name="Karnes M."/>
            <person name="Khan S."/>
            <person name="Koesema E."/>
            <person name="Ishida J."/>
            <person name="Jiang P.X."/>
            <person name="Jones T."/>
            <person name="Kawai J."/>
            <person name="Kamiya A."/>
            <person name="Meyers C."/>
            <person name="Nakajima M."/>
            <person name="Narusaka M."/>
            <person name="Seki M."/>
            <person name="Sakurai T."/>
            <person name="Satou M."/>
            <person name="Tamse R."/>
            <person name="Vaysberg M."/>
            <person name="Wallender E.K."/>
            <person name="Wong C."/>
            <person name="Yamamura Y."/>
            <person name="Yuan S."/>
            <person name="Shinozaki K."/>
            <person name="Davis R.W."/>
            <person name="Theologis A."/>
            <person name="Ecker J.R."/>
        </authorList>
    </citation>
    <scope>NUCLEOTIDE SEQUENCE [LARGE SCALE MRNA]</scope>
    <source>
        <strain>cv. Columbia</strain>
    </source>
</reference>
<reference key="4">
    <citation type="journal article" date="2009" name="Plant Physiol.">
        <title>Negative regulation of systemic acquired resistance by replication factor C subunit3 in Arabidopsis.</title>
        <authorList>
            <person name="Xia S."/>
            <person name="Zhu Z."/>
            <person name="Hao L."/>
            <person name="Chen J.G."/>
            <person name="Xiao L."/>
            <person name="Zhang Y."/>
            <person name="Li X."/>
        </authorList>
    </citation>
    <scope>FUNCTION</scope>
    <scope>SUBCELLULAR LOCATION</scope>
    <scope>INDUCTION BY SALICYLIC ACID</scope>
    <scope>DISRUPTION PHENOTYPE</scope>
    <scope>MUTAGENESIS OF GLY-84</scope>
</reference>
<reference key="5">
    <citation type="journal article" date="2010" name="Plant Signal. Behav.">
        <title>RFC3 regulates cell proliferation and pathogen resistance in Arabidopsis.</title>
        <authorList>
            <person name="Xia S."/>
            <person name="Xiao L."/>
            <person name="Gannon P."/>
            <person name="Li X."/>
        </authorList>
    </citation>
    <scope>FUNCTION</scope>
</reference>
<accession>Q9CAQ8</accession>